<dbReference type="EMBL" id="AC009322">
    <property type="protein sequence ID" value="AAD55477.1"/>
    <property type="molecule type" value="Genomic_DNA"/>
</dbReference>
<dbReference type="EMBL" id="CP002684">
    <property type="protein sequence ID" value="AEE36374.1"/>
    <property type="molecule type" value="Genomic_DNA"/>
</dbReference>
<dbReference type="EMBL" id="BT032869">
    <property type="protein sequence ID" value="ACD85595.1"/>
    <property type="molecule type" value="mRNA"/>
</dbReference>
<dbReference type="PIR" id="A96834">
    <property type="entry name" value="A96834"/>
</dbReference>
<dbReference type="RefSeq" id="NP_178141.1">
    <property type="nucleotide sequence ID" value="NM_106673.5"/>
</dbReference>
<dbReference type="FunCoup" id="Q9SSB7">
    <property type="interactions" value="102"/>
</dbReference>
<dbReference type="IntAct" id="Q9SSB7">
    <property type="interactions" value="1"/>
</dbReference>
<dbReference type="STRING" id="3702.Q9SSB7"/>
<dbReference type="GlyGen" id="Q9SSB7">
    <property type="glycosylation" value="1 site"/>
</dbReference>
<dbReference type="PaxDb" id="3702-AT1G80240.1"/>
<dbReference type="ProteomicsDB" id="185621"/>
<dbReference type="EnsemblPlants" id="AT1G80240.1">
    <property type="protein sequence ID" value="AT1G80240.1"/>
    <property type="gene ID" value="AT1G80240"/>
</dbReference>
<dbReference type="GeneID" id="844364"/>
<dbReference type="Gramene" id="AT1G80240.1">
    <property type="protein sequence ID" value="AT1G80240.1"/>
    <property type="gene ID" value="AT1G80240"/>
</dbReference>
<dbReference type="KEGG" id="ath:AT1G80240"/>
<dbReference type="Araport" id="AT1G80240"/>
<dbReference type="TAIR" id="AT1G80240">
    <property type="gene designation" value="DGR1"/>
</dbReference>
<dbReference type="eggNOG" id="ENOG502R7NV">
    <property type="taxonomic scope" value="Eukaryota"/>
</dbReference>
<dbReference type="HOGENOM" id="CLU_040251_0_0_1"/>
<dbReference type="InParanoid" id="Q9SSB7"/>
<dbReference type="OMA" id="HEEHPAC"/>
<dbReference type="PRO" id="PR:Q9SSB7"/>
<dbReference type="Proteomes" id="UP000006548">
    <property type="component" value="Chromosome 1"/>
</dbReference>
<dbReference type="ExpressionAtlas" id="Q9SSB7">
    <property type="expression patterns" value="baseline and differential"/>
</dbReference>
<dbReference type="GO" id="GO:0005576">
    <property type="term" value="C:extracellular region"/>
    <property type="evidence" value="ECO:0007669"/>
    <property type="project" value="UniProtKB-KW"/>
</dbReference>
<dbReference type="GO" id="GO:0009505">
    <property type="term" value="C:plant-type cell wall"/>
    <property type="evidence" value="ECO:0007005"/>
    <property type="project" value="TAIR"/>
</dbReference>
<dbReference type="FunFam" id="2.60.120.260:FF:000031">
    <property type="entry name" value="DUF642 family protein"/>
    <property type="match status" value="1"/>
</dbReference>
<dbReference type="FunFam" id="2.60.120.260:FF:000091">
    <property type="entry name" value="DUF642 family protein"/>
    <property type="match status" value="1"/>
</dbReference>
<dbReference type="Gene3D" id="2.60.120.260">
    <property type="entry name" value="Galactose-binding domain-like"/>
    <property type="match status" value="2"/>
</dbReference>
<dbReference type="InterPro" id="IPR006946">
    <property type="entry name" value="DGR2-like_dom"/>
</dbReference>
<dbReference type="InterPro" id="IPR008979">
    <property type="entry name" value="Galactose-bd-like_sf"/>
</dbReference>
<dbReference type="InterPro" id="IPR052437">
    <property type="entry name" value="Pectin_Meth_Modulator"/>
</dbReference>
<dbReference type="PANTHER" id="PTHR31265">
    <property type="entry name" value="OS02G0527500 PROTEIN-RELATED"/>
    <property type="match status" value="1"/>
</dbReference>
<dbReference type="PANTHER" id="PTHR31265:SF61">
    <property type="entry name" value="PROTEIN DUF642 L-GALACTONO-1,4-LACTONE-RESPONSIVE GENE 1"/>
    <property type="match status" value="1"/>
</dbReference>
<dbReference type="Pfam" id="PF04862">
    <property type="entry name" value="DUF642"/>
    <property type="match status" value="2"/>
</dbReference>
<dbReference type="SUPFAM" id="SSF49785">
    <property type="entry name" value="Galactose-binding domain-like"/>
    <property type="match status" value="1"/>
</dbReference>
<accession>Q9SSB7</accession>
<evidence type="ECO:0000255" key="1"/>
<evidence type="ECO:0000255" key="2">
    <source>
        <dbReference type="PROSITE-ProRule" id="PRU00498"/>
    </source>
</evidence>
<evidence type="ECO:0000269" key="3">
    <source>
    </source>
</evidence>
<evidence type="ECO:0000269" key="4">
    <source>
    </source>
</evidence>
<evidence type="ECO:0000303" key="5">
    <source>
    </source>
</evidence>
<evidence type="ECO:0000312" key="6">
    <source>
        <dbReference type="Araport" id="AT1G80240"/>
    </source>
</evidence>
<evidence type="ECO:0000312" key="7">
    <source>
        <dbReference type="EMBL" id="AAD55477.1"/>
    </source>
</evidence>
<comment type="subcellular location">
    <subcellularLocation>
        <location evidence="5">Secreted</location>
        <location evidence="5">Cell wall</location>
    </subcellularLocation>
</comment>
<comment type="tissue specificity">
    <text evidence="3">Expressed at low levels in roots, seedlings and leaves.</text>
</comment>
<comment type="developmental stage">
    <text evidence="3 4">Expressed at the root apex and at leaf primordia (PubMed:22323769). Accumulates specifically in hypocotyls in shade conditions (PubMed:27401556).</text>
</comment>
<comment type="induction">
    <text evidence="3">Induced by L-galactono-1,4-lactone (L-GalL), the terminal precursor for ascorbic acid (AsA) biosynthesis in the Smirnoff-Wheeler pathway.</text>
</comment>
<comment type="disruption phenotype">
    <text evidence="3">No obvious phenotype.</text>
</comment>
<reference key="1">
    <citation type="journal article" date="2000" name="Nature">
        <title>Sequence and analysis of chromosome 1 of the plant Arabidopsis thaliana.</title>
        <authorList>
            <person name="Theologis A."/>
            <person name="Ecker J.R."/>
            <person name="Palm C.J."/>
            <person name="Federspiel N.A."/>
            <person name="Kaul S."/>
            <person name="White O."/>
            <person name="Alonso J."/>
            <person name="Altafi H."/>
            <person name="Araujo R."/>
            <person name="Bowman C.L."/>
            <person name="Brooks S.Y."/>
            <person name="Buehler E."/>
            <person name="Chan A."/>
            <person name="Chao Q."/>
            <person name="Chen H."/>
            <person name="Cheuk R.F."/>
            <person name="Chin C.W."/>
            <person name="Chung M.K."/>
            <person name="Conn L."/>
            <person name="Conway A.B."/>
            <person name="Conway A.R."/>
            <person name="Creasy T.H."/>
            <person name="Dewar K."/>
            <person name="Dunn P."/>
            <person name="Etgu P."/>
            <person name="Feldblyum T.V."/>
            <person name="Feng J.-D."/>
            <person name="Fong B."/>
            <person name="Fujii C.Y."/>
            <person name="Gill J.E."/>
            <person name="Goldsmith A.D."/>
            <person name="Haas B."/>
            <person name="Hansen N.F."/>
            <person name="Hughes B."/>
            <person name="Huizar L."/>
            <person name="Hunter J.L."/>
            <person name="Jenkins J."/>
            <person name="Johnson-Hopson C."/>
            <person name="Khan S."/>
            <person name="Khaykin E."/>
            <person name="Kim C.J."/>
            <person name="Koo H.L."/>
            <person name="Kremenetskaia I."/>
            <person name="Kurtz D.B."/>
            <person name="Kwan A."/>
            <person name="Lam B."/>
            <person name="Langin-Hooper S."/>
            <person name="Lee A."/>
            <person name="Lee J.M."/>
            <person name="Lenz C.A."/>
            <person name="Li J.H."/>
            <person name="Li Y.-P."/>
            <person name="Lin X."/>
            <person name="Liu S.X."/>
            <person name="Liu Z.A."/>
            <person name="Luros J.S."/>
            <person name="Maiti R."/>
            <person name="Marziali A."/>
            <person name="Militscher J."/>
            <person name="Miranda M."/>
            <person name="Nguyen M."/>
            <person name="Nierman W.C."/>
            <person name="Osborne B.I."/>
            <person name="Pai G."/>
            <person name="Peterson J."/>
            <person name="Pham P.K."/>
            <person name="Rizzo M."/>
            <person name="Rooney T."/>
            <person name="Rowley D."/>
            <person name="Sakano H."/>
            <person name="Salzberg S.L."/>
            <person name="Schwartz J.R."/>
            <person name="Shinn P."/>
            <person name="Southwick A.M."/>
            <person name="Sun H."/>
            <person name="Tallon L.J."/>
            <person name="Tambunga G."/>
            <person name="Toriumi M.J."/>
            <person name="Town C.D."/>
            <person name="Utterback T."/>
            <person name="Van Aken S."/>
            <person name="Vaysberg M."/>
            <person name="Vysotskaia V.S."/>
            <person name="Walker M."/>
            <person name="Wu D."/>
            <person name="Yu G."/>
            <person name="Fraser C.M."/>
            <person name="Venter J.C."/>
            <person name="Davis R.W."/>
        </authorList>
    </citation>
    <scope>NUCLEOTIDE SEQUENCE [LARGE SCALE GENOMIC DNA]</scope>
    <source>
        <strain>cv. Columbia</strain>
    </source>
</reference>
<reference key="2">
    <citation type="journal article" date="2017" name="Plant J.">
        <title>Araport11: a complete reannotation of the Arabidopsis thaliana reference genome.</title>
        <authorList>
            <person name="Cheng C.Y."/>
            <person name="Krishnakumar V."/>
            <person name="Chan A.P."/>
            <person name="Thibaud-Nissen F."/>
            <person name="Schobel S."/>
            <person name="Town C.D."/>
        </authorList>
    </citation>
    <scope>GENOME REANNOTATION</scope>
    <source>
        <strain>cv. Columbia</strain>
    </source>
</reference>
<reference key="3">
    <citation type="submission" date="2008-06" db="EMBL/GenBank/DDBJ databases">
        <title>Arabidopsis ORF clones.</title>
        <authorList>
            <person name="de los Reyes C."/>
            <person name="Quan R."/>
            <person name="Chen H."/>
            <person name="Bautista V."/>
            <person name="Kim C.J."/>
            <person name="Ecker J.R."/>
        </authorList>
    </citation>
    <scope>NUCLEOTIDE SEQUENCE [LARGE SCALE MRNA]</scope>
    <source>
        <strain>cv. Columbia</strain>
    </source>
</reference>
<reference key="4">
    <citation type="journal article" date="2012" name="Plant Cell Physiol.">
        <title>Analysis of two L-Galactono-1,4-lactone-responsive genes with complementary expression during the development of Arabidopsis thaliana.</title>
        <authorList>
            <person name="Gao Y."/>
            <person name="Badejo A.A."/>
            <person name="Sawa Y."/>
            <person name="Ishikawa T."/>
        </authorList>
    </citation>
    <scope>DISRUPTION PHENOTYPE</scope>
    <scope>TISSUE SPECIFICITY</scope>
    <scope>DEVELOPMENTAL STAGE</scope>
    <scope>INDUCTION BY L-GALACTONO-1,4-LACTONE</scope>
    <scope>SUBCELLULAR LOCATION</scope>
    <source>
        <strain>cv. Columbia</strain>
    </source>
</reference>
<reference key="5">
    <citation type="journal article" date="2016" name="Genes Dev.">
        <title>The epidermis coordinates auxin-induced stem growth in response to shade.</title>
        <authorList>
            <person name="Procko C."/>
            <person name="Burko Y."/>
            <person name="Jaillais Y."/>
            <person name="Ljung K."/>
            <person name="Long J.A."/>
            <person name="Chory J."/>
        </authorList>
    </citation>
    <scope>DEVELOPMENTAL STAGE</scope>
    <source>
        <strain>cv. Columbia</strain>
    </source>
</reference>
<reference key="6">
    <citation type="journal article" date="2019" name="Int. J. Mol. Sci.">
        <title>Overview of the role of cell wall DUF642 proteins in plant development.</title>
        <authorList>
            <person name="Cruz-Valderrama J.E."/>
            <person name="Gomez-Maqueo X."/>
            <person name="Salazar-Iribe A."/>
            <person name="Zuniga-Sanchez E."/>
            <person name="Hernandez-Barrera A."/>
            <person name="Quezada-Rodriguez E."/>
            <person name="Gamboa-deBuen A."/>
        </authorList>
    </citation>
    <scope>REVIEW</scope>
</reference>
<feature type="signal peptide" evidence="1">
    <location>
        <begin position="1"/>
        <end position="22"/>
    </location>
</feature>
<feature type="chain" id="PRO_5014313264" description="Protein DUF642 L-GALACTONO-1,4-LACTONE-RESPONSIVE GENE 1">
    <location>
        <begin position="23"/>
        <end position="370"/>
    </location>
</feature>
<feature type="glycosylation site" description="N-linked (GlcNAc...) asparagine" evidence="2">
    <location>
        <position position="124"/>
    </location>
</feature>
<keyword id="KW-0134">Cell wall</keyword>
<keyword id="KW-0325">Glycoprotein</keyword>
<keyword id="KW-1185">Reference proteome</keyword>
<keyword id="KW-0964">Secreted</keyword>
<keyword id="KW-0732">Signal</keyword>
<gene>
    <name evidence="5" type="primary">DGR1</name>
    <name evidence="6" type="ordered locus">At1g80240</name>
    <name evidence="7" type="ORF">F18B13.30</name>
</gene>
<name>DGR1_ARATH</name>
<sequence>MMYQEAALLLALLFISSNVVLSAPVRDGLLPNGNFELGPKPSQMKGSVVKERTAVPNWNIIGFVEFIKSGQKQDDMVLVVPQGSSAVRLGNEASISQKISVLPGRLYSITFSAARTCAQDERLNISVTHESGVIPIQTMYGSDGWDSYSWAFKAGGPEIEIRFHNPGVEEHPACGPLIDAVAIKALFPPRFSGYNLIKNGNFEEGPYVFPTAKWGVLIPPFIEDDNSPLPGWMIESLKAVKYVDKAHFAVPEGHRAIELVGGKESAISQIVRTSLNKFYALTFNVGDARDGCEGPMIVEAFAGQGKVMVDYASKGKGGFRRGRLVFKAVSARTRVTFLSTFYHMKSDHSGSLCGPVIDDVRLVAVGKLRG</sequence>
<protein>
    <recommendedName>
        <fullName evidence="5">Protein DUF642 L-GALACTONO-1,4-LACTONE-RESPONSIVE GENE 1</fullName>
        <shortName evidence="5">DUF642 L-GalL-RESPONSIVE GENE 1</shortName>
    </recommendedName>
</protein>
<proteinExistence type="evidence at transcript level"/>
<organism>
    <name type="scientific">Arabidopsis thaliana</name>
    <name type="common">Mouse-ear cress</name>
    <dbReference type="NCBI Taxonomy" id="3702"/>
    <lineage>
        <taxon>Eukaryota</taxon>
        <taxon>Viridiplantae</taxon>
        <taxon>Streptophyta</taxon>
        <taxon>Embryophyta</taxon>
        <taxon>Tracheophyta</taxon>
        <taxon>Spermatophyta</taxon>
        <taxon>Magnoliopsida</taxon>
        <taxon>eudicotyledons</taxon>
        <taxon>Gunneridae</taxon>
        <taxon>Pentapetalae</taxon>
        <taxon>rosids</taxon>
        <taxon>malvids</taxon>
        <taxon>Brassicales</taxon>
        <taxon>Brassicaceae</taxon>
        <taxon>Camelineae</taxon>
        <taxon>Arabidopsis</taxon>
    </lineage>
</organism>